<protein>
    <recommendedName>
        <fullName>Heme-binding protein 2</fullName>
    </recommendedName>
    <alternativeName>
        <fullName>Placental protein 23</fullName>
        <shortName>PP23</shortName>
    </alternativeName>
    <alternativeName>
        <fullName>Protein SOUL</fullName>
    </alternativeName>
</protein>
<comment type="function">
    <text evidence="3">Can promote mitochondrial permeability transition and facilitate necrotic cell death under different types of stress conditions.</text>
</comment>
<comment type="subunit">
    <text evidence="2 3 5 6">Monomer. Interacts with LRPPRC (PubMed:11827465). May interact with BCL2L1; an interaction with BCL2L1 was observed using a peptide, but not with the full-length protein (PubMed:21639858). The full-length protein would have to undergo a major conformation change for the interaction to occur (PubMed:21639858). Interacts with PDCD6 (PubMed:27784779).</text>
</comment>
<comment type="interaction">
    <interactant intactId="EBI-741593">
        <id>Q9Y5Z4</id>
    </interactant>
    <interactant intactId="EBI-352915">
        <id>O75340</id>
        <label>PDCD6</label>
    </interactant>
    <organismsDiffer>false</organismsDiffer>
    <experiments>9</experiments>
</comment>
<comment type="interaction">
    <interactant intactId="EBI-741593">
        <id>Q9Y5Z4</id>
    </interactant>
    <interactant intactId="EBI-742388">
        <id>Q9H8W4</id>
        <label>PLEKHF2</label>
    </interactant>
    <organismsDiffer>false</organismsDiffer>
    <experiments>3</experiments>
</comment>
<comment type="subcellular location">
    <subcellularLocation>
        <location evidence="3">Cytoplasm</location>
    </subcellularLocation>
    <subcellularLocation>
        <location evidence="3">Mitochondrion</location>
    </subcellularLocation>
    <text evidence="3">Mainly localized to the cytoplasm with a much lower abundance in the mitochondrion.</text>
</comment>
<comment type="alternative products">
    <event type="alternative splicing"/>
    <isoform>
        <id>Q9Y5Z4-1</id>
        <name>1</name>
        <sequence type="displayed"/>
    </isoform>
    <isoform>
        <id>Q9Y5Z4-2</id>
        <name>2</name>
        <sequence type="described" ref="VSP_017057"/>
    </isoform>
</comment>
<comment type="tissue specificity">
    <text evidence="4">Detected in placenta.</text>
</comment>
<comment type="domain">
    <text evidence="5">Forms a distorted beta-barrel structure, with two helices that are packed against the outer surface of the barrel.</text>
</comment>
<comment type="similarity">
    <text evidence="8">Belongs to the HEBP family.</text>
</comment>
<comment type="caution">
    <text evidence="8">Has been described as heme-binding protein in mouse, but His-42, a residue essential for heme binding in mouse, is not conserved in all orthologs, or in the heme-binding family member HEBP1.</text>
</comment>
<evidence type="ECO:0000256" key="1">
    <source>
        <dbReference type="SAM" id="MobiDB-lite"/>
    </source>
</evidence>
<evidence type="ECO:0000269" key="2">
    <source>
    </source>
</evidence>
<evidence type="ECO:0000269" key="3">
    <source>
    </source>
</evidence>
<evidence type="ECO:0000269" key="4">
    <source>
    </source>
</evidence>
<evidence type="ECO:0000269" key="5">
    <source>
    </source>
</evidence>
<evidence type="ECO:0000269" key="6">
    <source>
    </source>
</evidence>
<evidence type="ECO:0000303" key="7">
    <source>
    </source>
</evidence>
<evidence type="ECO:0000305" key="8"/>
<evidence type="ECO:0007744" key="9">
    <source>
        <dbReference type="PDB" id="5GQQ"/>
    </source>
</evidence>
<evidence type="ECO:0007744" key="10">
    <source>
    </source>
</evidence>
<evidence type="ECO:0007744" key="11">
    <source>
    </source>
</evidence>
<evidence type="ECO:0007744" key="12">
    <source>
    </source>
</evidence>
<evidence type="ECO:0007744" key="13">
    <source>
    </source>
</evidence>
<evidence type="ECO:0007829" key="14">
    <source>
        <dbReference type="PDB" id="3R8J"/>
    </source>
</evidence>
<evidence type="ECO:0007829" key="15">
    <source>
        <dbReference type="PDB" id="3R8K"/>
    </source>
</evidence>
<evidence type="ECO:0007829" key="16">
    <source>
        <dbReference type="PDB" id="4AYZ"/>
    </source>
</evidence>
<evidence type="ECO:0007829" key="17">
    <source>
        <dbReference type="PDB" id="5GQQ"/>
    </source>
</evidence>
<feature type="initiator methionine" description="Removed" evidence="10 12">
    <location>
        <position position="1"/>
    </location>
</feature>
<feature type="chain" id="PRO_0000116900" description="Heme-binding protein 2">
    <location>
        <begin position="2"/>
        <end position="205"/>
    </location>
</feature>
<feature type="region of interest" description="Disordered" evidence="1">
    <location>
        <begin position="1"/>
        <end position="39"/>
    </location>
</feature>
<feature type="modified residue" description="N-acetylalanine" evidence="10 12">
    <location>
        <position position="2"/>
    </location>
</feature>
<feature type="modified residue" description="Phosphoserine" evidence="11 13">
    <location>
        <position position="181"/>
    </location>
</feature>
<feature type="splice variant" id="VSP_017057" description="In isoform 2." evidence="7">
    <original>AEDAAAQAVETPGWKAPEDAGP</original>
    <variation>F</variation>
    <location>
        <begin position="12"/>
        <end position="33"/>
    </location>
</feature>
<feature type="sequence variant" id="VAR_053364" description="In dbSNP:rs3734303.">
    <original>R</original>
    <variation>Q</variation>
    <location>
        <position position="140"/>
    </location>
</feature>
<feature type="sequence variant" id="VAR_053365" description="In dbSNP:rs14812.">
    <original>E</original>
    <variation>A</variation>
    <location>
        <position position="191"/>
    </location>
</feature>
<feature type="helix" evidence="15">
    <location>
        <begin position="29"/>
        <end position="31"/>
    </location>
</feature>
<feature type="strand" evidence="17">
    <location>
        <begin position="35"/>
        <end position="37"/>
    </location>
</feature>
<feature type="strand" evidence="14">
    <location>
        <begin position="39"/>
        <end position="43"/>
    </location>
</feature>
<feature type="strand" evidence="14">
    <location>
        <begin position="46"/>
        <end position="56"/>
    </location>
</feature>
<feature type="helix" evidence="14">
    <location>
        <begin position="58"/>
        <end position="73"/>
    </location>
</feature>
<feature type="strand" evidence="14">
    <location>
        <begin position="89"/>
        <end position="94"/>
    </location>
</feature>
<feature type="strand" evidence="16">
    <location>
        <begin position="97"/>
        <end position="101"/>
    </location>
</feature>
<feature type="strand" evidence="14">
    <location>
        <begin position="103"/>
        <end position="110"/>
    </location>
</feature>
<feature type="helix" evidence="14">
    <location>
        <begin position="113"/>
        <end position="116"/>
    </location>
</feature>
<feature type="strand" evidence="14">
    <location>
        <begin position="122"/>
        <end position="124"/>
    </location>
</feature>
<feature type="strand" evidence="14">
    <location>
        <begin position="127"/>
        <end position="132"/>
    </location>
</feature>
<feature type="strand" evidence="14">
    <location>
        <begin position="135"/>
        <end position="144"/>
    </location>
</feature>
<feature type="helix" evidence="14">
    <location>
        <begin position="148"/>
        <end position="164"/>
    </location>
</feature>
<feature type="strand" evidence="14">
    <location>
        <begin position="174"/>
        <end position="183"/>
    </location>
</feature>
<feature type="strand" evidence="14">
    <location>
        <begin position="186"/>
        <end position="188"/>
    </location>
</feature>
<feature type="strand" evidence="14">
    <location>
        <begin position="190"/>
        <end position="196"/>
    </location>
</feature>
<dbReference type="EMBL" id="AF117616">
    <property type="protein sequence ID" value="AAD32099.1"/>
    <property type="molecule type" value="mRNA"/>
</dbReference>
<dbReference type="EMBL" id="AF411610">
    <property type="protein sequence ID" value="AAL07394.1"/>
    <property type="molecule type" value="mRNA"/>
</dbReference>
<dbReference type="EMBL" id="AY427823">
    <property type="protein sequence ID" value="AAR88624.1"/>
    <property type="molecule type" value="mRNA"/>
</dbReference>
<dbReference type="EMBL" id="AL031003">
    <property type="status" value="NOT_ANNOTATED_CDS"/>
    <property type="molecule type" value="Genomic_DNA"/>
</dbReference>
<dbReference type="EMBL" id="BC008205">
    <property type="protein sequence ID" value="AAH08205.1"/>
    <property type="molecule type" value="mRNA"/>
</dbReference>
<dbReference type="EMBL" id="BC010290">
    <property type="protein sequence ID" value="AAH10290.1"/>
    <property type="molecule type" value="mRNA"/>
</dbReference>
<dbReference type="EMBL" id="BC093037">
    <property type="protein sequence ID" value="AAH93037.1"/>
    <property type="molecule type" value="mRNA"/>
</dbReference>
<dbReference type="CCDS" id="CCDS5191.1">
    <molecule id="Q9Y5Z4-1"/>
</dbReference>
<dbReference type="RefSeq" id="NP_055135.1">
    <molecule id="Q9Y5Z4-1"/>
    <property type="nucleotide sequence ID" value="NM_014320.3"/>
</dbReference>
<dbReference type="PDB" id="3R85">
    <property type="method" value="X-ray"/>
    <property type="resolution" value="1.95 A"/>
    <property type="chains" value="E/F/G/H=147-172"/>
</dbReference>
<dbReference type="PDB" id="3R8J">
    <property type="method" value="X-ray"/>
    <property type="resolution" value="1.60 A"/>
    <property type="chains" value="A/B=2-205"/>
</dbReference>
<dbReference type="PDB" id="3R8K">
    <property type="method" value="X-ray"/>
    <property type="resolution" value="2.85 A"/>
    <property type="chains" value="A/B/C/D=2-205"/>
</dbReference>
<dbReference type="PDB" id="4AYZ">
    <property type="method" value="X-ray"/>
    <property type="resolution" value="3.50 A"/>
    <property type="chains" value="A/B=1-205"/>
</dbReference>
<dbReference type="PDB" id="4B0Y">
    <property type="method" value="X-ray"/>
    <property type="resolution" value="3.50 A"/>
    <property type="chains" value="A=1-205"/>
</dbReference>
<dbReference type="PDB" id="5GQQ">
    <property type="method" value="X-ray"/>
    <property type="resolution" value="2.20 A"/>
    <property type="chains" value="A/B=20-197"/>
</dbReference>
<dbReference type="PDBsum" id="3R85"/>
<dbReference type="PDBsum" id="3R8J"/>
<dbReference type="PDBsum" id="3R8K"/>
<dbReference type="PDBsum" id="4AYZ"/>
<dbReference type="PDBsum" id="4B0Y"/>
<dbReference type="PDBsum" id="5GQQ"/>
<dbReference type="SMR" id="Q9Y5Z4"/>
<dbReference type="BioGRID" id="117128">
    <property type="interactions" value="15"/>
</dbReference>
<dbReference type="FunCoup" id="Q9Y5Z4">
    <property type="interactions" value="160"/>
</dbReference>
<dbReference type="IntAct" id="Q9Y5Z4">
    <property type="interactions" value="5"/>
</dbReference>
<dbReference type="STRING" id="9606.ENSP00000475750"/>
<dbReference type="GlyGen" id="Q9Y5Z4">
    <property type="glycosylation" value="4 sites, 1 O-linked glycan (4 sites)"/>
</dbReference>
<dbReference type="iPTMnet" id="Q9Y5Z4"/>
<dbReference type="MetOSite" id="Q9Y5Z4"/>
<dbReference type="PhosphoSitePlus" id="Q9Y5Z4"/>
<dbReference type="BioMuta" id="HEBP2"/>
<dbReference type="DMDM" id="74753513"/>
<dbReference type="jPOST" id="Q9Y5Z4"/>
<dbReference type="MassIVE" id="Q9Y5Z4"/>
<dbReference type="PaxDb" id="9606-ENSP00000475750"/>
<dbReference type="PeptideAtlas" id="Q9Y5Z4"/>
<dbReference type="ProteomicsDB" id="86551">
    <molecule id="Q9Y5Z4-1"/>
</dbReference>
<dbReference type="ProteomicsDB" id="86552">
    <molecule id="Q9Y5Z4-2"/>
</dbReference>
<dbReference type="Pumba" id="Q9Y5Z4"/>
<dbReference type="Antibodypedia" id="1915">
    <property type="antibodies" value="148 antibodies from 23 providers"/>
</dbReference>
<dbReference type="DNASU" id="23593"/>
<dbReference type="Ensembl" id="ENST00000607197.6">
    <molecule id="Q9Y5Z4-1"/>
    <property type="protein sequence ID" value="ENSP00000475750.1"/>
    <property type="gene ID" value="ENSG00000051620.11"/>
</dbReference>
<dbReference type="GeneID" id="23593"/>
<dbReference type="KEGG" id="hsa:23593"/>
<dbReference type="MANE-Select" id="ENST00000607197.6">
    <property type="protein sequence ID" value="ENSP00000475750.1"/>
    <property type="RefSeq nucleotide sequence ID" value="NM_014320.3"/>
    <property type="RefSeq protein sequence ID" value="NP_055135.1"/>
</dbReference>
<dbReference type="UCSC" id="uc003qhw.2">
    <molecule id="Q9Y5Z4-1"/>
    <property type="organism name" value="human"/>
</dbReference>
<dbReference type="AGR" id="HGNC:15716"/>
<dbReference type="CTD" id="23593"/>
<dbReference type="DisGeNET" id="23593"/>
<dbReference type="GeneCards" id="HEBP2"/>
<dbReference type="HGNC" id="HGNC:15716">
    <property type="gene designation" value="HEBP2"/>
</dbReference>
<dbReference type="HPA" id="ENSG00000051620">
    <property type="expression patterns" value="Low tissue specificity"/>
</dbReference>
<dbReference type="MIM" id="605825">
    <property type="type" value="gene"/>
</dbReference>
<dbReference type="neXtProt" id="NX_Q9Y5Z4"/>
<dbReference type="OpenTargets" id="ENSG00000051620"/>
<dbReference type="PharmGKB" id="PA25935"/>
<dbReference type="VEuPathDB" id="HostDB:ENSG00000051620"/>
<dbReference type="eggNOG" id="ENOG502RXJR">
    <property type="taxonomic scope" value="Eukaryota"/>
</dbReference>
<dbReference type="GeneTree" id="ENSGT00940000160412"/>
<dbReference type="HOGENOM" id="CLU_068699_2_1_1"/>
<dbReference type="InParanoid" id="Q9Y5Z4"/>
<dbReference type="OMA" id="YEIRTYH"/>
<dbReference type="OrthoDB" id="6424451at2759"/>
<dbReference type="PAN-GO" id="Q9Y5Z4">
    <property type="GO annotations" value="2 GO annotations based on evolutionary models"/>
</dbReference>
<dbReference type="PhylomeDB" id="Q9Y5Z4"/>
<dbReference type="TreeFam" id="TF328887"/>
<dbReference type="PathwayCommons" id="Q9Y5Z4"/>
<dbReference type="Reactome" id="R-HSA-6798695">
    <property type="pathway name" value="Neutrophil degranulation"/>
</dbReference>
<dbReference type="SignaLink" id="Q9Y5Z4"/>
<dbReference type="BioGRID-ORCS" id="23593">
    <property type="hits" value="12 hits in 1157 CRISPR screens"/>
</dbReference>
<dbReference type="ChiTaRS" id="HEBP2">
    <property type="organism name" value="human"/>
</dbReference>
<dbReference type="EvolutionaryTrace" id="Q9Y5Z4"/>
<dbReference type="GeneWiki" id="HEBP2"/>
<dbReference type="GenomeRNAi" id="23593"/>
<dbReference type="Pharos" id="Q9Y5Z4">
    <property type="development level" value="Tbio"/>
</dbReference>
<dbReference type="PRO" id="PR:Q9Y5Z4"/>
<dbReference type="Proteomes" id="UP000005640">
    <property type="component" value="Chromosome 6"/>
</dbReference>
<dbReference type="RNAct" id="Q9Y5Z4">
    <property type="molecule type" value="protein"/>
</dbReference>
<dbReference type="Bgee" id="ENSG00000051620">
    <property type="expression patterns" value="Expressed in parotid gland and 205 other cell types or tissues"/>
</dbReference>
<dbReference type="ExpressionAtlas" id="Q9Y5Z4">
    <property type="expression patterns" value="baseline and differential"/>
</dbReference>
<dbReference type="GO" id="GO:0035578">
    <property type="term" value="C:azurophil granule lumen"/>
    <property type="evidence" value="ECO:0000304"/>
    <property type="project" value="Reactome"/>
</dbReference>
<dbReference type="GO" id="GO:0005737">
    <property type="term" value="C:cytoplasm"/>
    <property type="evidence" value="ECO:0000314"/>
    <property type="project" value="UniProtKB"/>
</dbReference>
<dbReference type="GO" id="GO:0070062">
    <property type="term" value="C:extracellular exosome"/>
    <property type="evidence" value="ECO:0007005"/>
    <property type="project" value="UniProtKB"/>
</dbReference>
<dbReference type="GO" id="GO:0005576">
    <property type="term" value="C:extracellular region"/>
    <property type="evidence" value="ECO:0000304"/>
    <property type="project" value="Reactome"/>
</dbReference>
<dbReference type="GO" id="GO:0005739">
    <property type="term" value="C:mitochondrion"/>
    <property type="evidence" value="ECO:0000314"/>
    <property type="project" value="UniProtKB"/>
</dbReference>
<dbReference type="GO" id="GO:0020037">
    <property type="term" value="F:heme binding"/>
    <property type="evidence" value="ECO:0000318"/>
    <property type="project" value="GO_Central"/>
</dbReference>
<dbReference type="FunFam" id="3.20.80.10:FF:000006">
    <property type="entry name" value="heme-binding protein 2"/>
    <property type="match status" value="1"/>
</dbReference>
<dbReference type="Gene3D" id="3.20.80.10">
    <property type="entry name" value="Regulatory factor, effector binding domain"/>
    <property type="match status" value="1"/>
</dbReference>
<dbReference type="InterPro" id="IPR011256">
    <property type="entry name" value="Reg_factor_effector_dom_sf"/>
</dbReference>
<dbReference type="InterPro" id="IPR006917">
    <property type="entry name" value="SOUL_haem-bd"/>
</dbReference>
<dbReference type="PANTHER" id="PTHR11220:SF70">
    <property type="entry name" value="HEME-BINDING PROTEIN 2"/>
    <property type="match status" value="1"/>
</dbReference>
<dbReference type="PANTHER" id="PTHR11220">
    <property type="entry name" value="HEME-BINDING PROTEIN-RELATED"/>
    <property type="match status" value="1"/>
</dbReference>
<dbReference type="Pfam" id="PF04832">
    <property type="entry name" value="SOUL"/>
    <property type="match status" value="1"/>
</dbReference>
<dbReference type="SUPFAM" id="SSF55136">
    <property type="entry name" value="Probable bacterial effector-binding domain"/>
    <property type="match status" value="1"/>
</dbReference>
<keyword id="KW-0002">3D-structure</keyword>
<keyword id="KW-0007">Acetylation</keyword>
<keyword id="KW-0025">Alternative splicing</keyword>
<keyword id="KW-0963">Cytoplasm</keyword>
<keyword id="KW-0903">Direct protein sequencing</keyword>
<keyword id="KW-0496">Mitochondrion</keyword>
<keyword id="KW-0597">Phosphoprotein</keyword>
<keyword id="KW-1267">Proteomics identification</keyword>
<keyword id="KW-1185">Reference proteome</keyword>
<organism>
    <name type="scientific">Homo sapiens</name>
    <name type="common">Human</name>
    <dbReference type="NCBI Taxonomy" id="9606"/>
    <lineage>
        <taxon>Eukaryota</taxon>
        <taxon>Metazoa</taxon>
        <taxon>Chordata</taxon>
        <taxon>Craniata</taxon>
        <taxon>Vertebrata</taxon>
        <taxon>Euteleostomi</taxon>
        <taxon>Mammalia</taxon>
        <taxon>Eutheria</taxon>
        <taxon>Euarchontoglires</taxon>
        <taxon>Primates</taxon>
        <taxon>Haplorrhini</taxon>
        <taxon>Catarrhini</taxon>
        <taxon>Hominidae</taxon>
        <taxon>Homo</taxon>
    </lineage>
</organism>
<proteinExistence type="evidence at protein level"/>
<gene>
    <name type="primary">HEBP2</name>
    <name type="synonym">C6orf34</name>
    <name type="synonym">SOUL</name>
</gene>
<sequence>MAEPLQPDPGAAEDAAAQAVETPGWKAPEDAGPQPGSYEIRHYGPAKWVSTSVESMDWDSAIQTGFTKLNSYIQGKNEKEMKIKMTAPVTSYVEPGSGPFSESTITISLYIPSEQQFDPPRPLESDVFIEDRAEMTVFVRSFDGFSSAQKNQEQLLTLASILREDGKVFDEKVYYTAGYNSPVKLLNRNNEVWLIQKNEPTKENE</sequence>
<name>HEBP2_HUMAN</name>
<accession>Q9Y5Z4</accession>
<accession>Q96P57</accession>
<reference key="1">
    <citation type="journal article" date="1999" name="Brain Res. Mol. Brain Res.">
        <title>Discovery of a putative heme-binding protein family (SOUL/HBP) by two-tissue suppression subtractive hybridization and database searches.</title>
        <authorList>
            <person name="Zylka M.J."/>
            <person name="Reppert S.M."/>
        </authorList>
    </citation>
    <scope>NUCLEOTIDE SEQUENCE [MRNA] (ISOFORM 1)</scope>
</reference>
<reference key="2">
    <citation type="journal article" date="2002" name="Genomics">
        <title>Sequence analysis of LRPPRC and its SEC1 domain interaction partners suggests roles in cytoskeletal organization, vesicular trafficking, nucleocytosolic shuttling, and chromosome activity.</title>
        <authorList>
            <person name="Liu L."/>
            <person name="McKeehan W.L."/>
        </authorList>
    </citation>
    <scope>NUCLEOTIDE SEQUENCE [MRNA] (ISOFORM 2)</scope>
    <scope>INTERACTION WITH LRPPRC</scope>
</reference>
<reference key="3">
    <citation type="submission" date="2003-10" db="EMBL/GenBank/DDBJ databases">
        <title>Isolation and sequence analysis of a cDNA encoding placental protein 23 (PP23).</title>
        <authorList>
            <person name="Szigeti A."/>
            <person name="Boronkai A."/>
            <person name="Bellyei S."/>
            <person name="Komlosi K."/>
            <person name="Melegh B."/>
            <person name="Sumegi B."/>
            <person name="Bohn H."/>
            <person name="Than G.N."/>
            <person name="Than N.G."/>
        </authorList>
    </citation>
    <scope>NUCLEOTIDE SEQUENCE [MRNA] (ISOFORM 1)</scope>
</reference>
<reference key="4">
    <citation type="journal article" date="2003" name="Nature">
        <title>The DNA sequence and analysis of human chromosome 6.</title>
        <authorList>
            <person name="Mungall A.J."/>
            <person name="Palmer S.A."/>
            <person name="Sims S.K."/>
            <person name="Edwards C.A."/>
            <person name="Ashurst J.L."/>
            <person name="Wilming L."/>
            <person name="Jones M.C."/>
            <person name="Horton R."/>
            <person name="Hunt S.E."/>
            <person name="Scott C.E."/>
            <person name="Gilbert J.G.R."/>
            <person name="Clamp M.E."/>
            <person name="Bethel G."/>
            <person name="Milne S."/>
            <person name="Ainscough R."/>
            <person name="Almeida J.P."/>
            <person name="Ambrose K.D."/>
            <person name="Andrews T.D."/>
            <person name="Ashwell R.I.S."/>
            <person name="Babbage A.K."/>
            <person name="Bagguley C.L."/>
            <person name="Bailey J."/>
            <person name="Banerjee R."/>
            <person name="Barker D.J."/>
            <person name="Barlow K.F."/>
            <person name="Bates K."/>
            <person name="Beare D.M."/>
            <person name="Beasley H."/>
            <person name="Beasley O."/>
            <person name="Bird C.P."/>
            <person name="Blakey S.E."/>
            <person name="Bray-Allen S."/>
            <person name="Brook J."/>
            <person name="Brown A.J."/>
            <person name="Brown J.Y."/>
            <person name="Burford D.C."/>
            <person name="Burrill W."/>
            <person name="Burton J."/>
            <person name="Carder C."/>
            <person name="Carter N.P."/>
            <person name="Chapman J.C."/>
            <person name="Clark S.Y."/>
            <person name="Clark G."/>
            <person name="Clee C.M."/>
            <person name="Clegg S."/>
            <person name="Cobley V."/>
            <person name="Collier R.E."/>
            <person name="Collins J.E."/>
            <person name="Colman L.K."/>
            <person name="Corby N.R."/>
            <person name="Coville G.J."/>
            <person name="Culley K.M."/>
            <person name="Dhami P."/>
            <person name="Davies J."/>
            <person name="Dunn M."/>
            <person name="Earthrowl M.E."/>
            <person name="Ellington A.E."/>
            <person name="Evans K.A."/>
            <person name="Faulkner L."/>
            <person name="Francis M.D."/>
            <person name="Frankish A."/>
            <person name="Frankland J."/>
            <person name="French L."/>
            <person name="Garner P."/>
            <person name="Garnett J."/>
            <person name="Ghori M.J."/>
            <person name="Gilby L.M."/>
            <person name="Gillson C.J."/>
            <person name="Glithero R.J."/>
            <person name="Grafham D.V."/>
            <person name="Grant M."/>
            <person name="Gribble S."/>
            <person name="Griffiths C."/>
            <person name="Griffiths M.N.D."/>
            <person name="Hall R."/>
            <person name="Halls K.S."/>
            <person name="Hammond S."/>
            <person name="Harley J.L."/>
            <person name="Hart E.A."/>
            <person name="Heath P.D."/>
            <person name="Heathcott R."/>
            <person name="Holmes S.J."/>
            <person name="Howden P.J."/>
            <person name="Howe K.L."/>
            <person name="Howell G.R."/>
            <person name="Huckle E."/>
            <person name="Humphray S.J."/>
            <person name="Humphries M.D."/>
            <person name="Hunt A.R."/>
            <person name="Johnson C.M."/>
            <person name="Joy A.A."/>
            <person name="Kay M."/>
            <person name="Keenan S.J."/>
            <person name="Kimberley A.M."/>
            <person name="King A."/>
            <person name="Laird G.K."/>
            <person name="Langford C."/>
            <person name="Lawlor S."/>
            <person name="Leongamornlert D.A."/>
            <person name="Leversha M."/>
            <person name="Lloyd C.R."/>
            <person name="Lloyd D.M."/>
            <person name="Loveland J.E."/>
            <person name="Lovell J."/>
            <person name="Martin S."/>
            <person name="Mashreghi-Mohammadi M."/>
            <person name="Maslen G.L."/>
            <person name="Matthews L."/>
            <person name="McCann O.T."/>
            <person name="McLaren S.J."/>
            <person name="McLay K."/>
            <person name="McMurray A."/>
            <person name="Moore M.J.F."/>
            <person name="Mullikin J.C."/>
            <person name="Niblett D."/>
            <person name="Nickerson T."/>
            <person name="Novik K.L."/>
            <person name="Oliver K."/>
            <person name="Overton-Larty E.K."/>
            <person name="Parker A."/>
            <person name="Patel R."/>
            <person name="Pearce A.V."/>
            <person name="Peck A.I."/>
            <person name="Phillimore B.J.C.T."/>
            <person name="Phillips S."/>
            <person name="Plumb R.W."/>
            <person name="Porter K.M."/>
            <person name="Ramsey Y."/>
            <person name="Ranby S.A."/>
            <person name="Rice C.M."/>
            <person name="Ross M.T."/>
            <person name="Searle S.M."/>
            <person name="Sehra H.K."/>
            <person name="Sheridan E."/>
            <person name="Skuce C.D."/>
            <person name="Smith S."/>
            <person name="Smith M."/>
            <person name="Spraggon L."/>
            <person name="Squares S.L."/>
            <person name="Steward C.A."/>
            <person name="Sycamore N."/>
            <person name="Tamlyn-Hall G."/>
            <person name="Tester J."/>
            <person name="Theaker A.J."/>
            <person name="Thomas D.W."/>
            <person name="Thorpe A."/>
            <person name="Tracey A."/>
            <person name="Tromans A."/>
            <person name="Tubby B."/>
            <person name="Wall M."/>
            <person name="Wallis J.M."/>
            <person name="West A.P."/>
            <person name="White S.S."/>
            <person name="Whitehead S.L."/>
            <person name="Whittaker H."/>
            <person name="Wild A."/>
            <person name="Willey D.J."/>
            <person name="Wilmer T.E."/>
            <person name="Wood J.M."/>
            <person name="Wray P.W."/>
            <person name="Wyatt J.C."/>
            <person name="Young L."/>
            <person name="Younger R.M."/>
            <person name="Bentley D.R."/>
            <person name="Coulson A."/>
            <person name="Durbin R.M."/>
            <person name="Hubbard T."/>
            <person name="Sulston J.E."/>
            <person name="Dunham I."/>
            <person name="Rogers J."/>
            <person name="Beck S."/>
        </authorList>
    </citation>
    <scope>NUCLEOTIDE SEQUENCE [LARGE SCALE GENOMIC DNA]</scope>
</reference>
<reference key="5">
    <citation type="journal article" date="2004" name="Genome Res.">
        <title>The status, quality, and expansion of the NIH full-length cDNA project: the Mammalian Gene Collection (MGC).</title>
        <authorList>
            <consortium name="The MGC Project Team"/>
        </authorList>
    </citation>
    <scope>NUCLEOTIDE SEQUENCE [LARGE SCALE MRNA] (ISOFORM 1)</scope>
    <source>
        <tissue>Eye</tissue>
        <tissue>Placenta</tissue>
    </source>
</reference>
<reference key="6">
    <citation type="submission" date="2008-12" db="UniProtKB">
        <authorList>
            <person name="Lubec G."/>
            <person name="Chen W.-Q."/>
            <person name="Sun Y."/>
        </authorList>
    </citation>
    <scope>PROTEIN SEQUENCE OF 27-41; 48-76; 133-163; 173-184 AND 189-197</scope>
    <scope>IDENTIFICATION BY MASS SPECTROMETRY</scope>
    <source>
        <tissue>Fetal brain cortex</tissue>
    </source>
</reference>
<reference key="7">
    <citation type="journal article" date="1991" name="Arch. Gynecol. Obstet.">
        <title>Isolation and characterization of five new soluble placental tissue proteins (PP22, PP23, PP24, PP25, PP26).</title>
        <authorList>
            <person name="Bohn H."/>
            <person name="Winckler W."/>
        </authorList>
    </citation>
    <scope>TISSUE SPECIFICITY</scope>
</reference>
<reference key="8">
    <citation type="journal article" date="2006" name="FEBS Lett.">
        <title>Induction of necrotic cell death and mitochondrial permeabilization by heme binding protein 2/SOUL.</title>
        <authorList>
            <person name="Szigeti A."/>
            <person name="Bellyei S."/>
            <person name="Gasz B."/>
            <person name="Boronkai A."/>
            <person name="Hocsak E."/>
            <person name="Minik O."/>
            <person name="Bognar Z."/>
            <person name="Varbiro G."/>
            <person name="Sumegi B."/>
            <person name="Gallyas F. Jr."/>
        </authorList>
    </citation>
    <scope>FUNCTION</scope>
    <scope>SUBCELLULAR LOCATION</scope>
</reference>
<reference key="9">
    <citation type="journal article" date="2009" name="Anal. Chem.">
        <title>Lys-N and trypsin cover complementary parts of the phosphoproteome in a refined SCX-based approach.</title>
        <authorList>
            <person name="Gauci S."/>
            <person name="Helbig A.O."/>
            <person name="Slijper M."/>
            <person name="Krijgsveld J."/>
            <person name="Heck A.J."/>
            <person name="Mohammed S."/>
        </authorList>
    </citation>
    <scope>ACETYLATION [LARGE SCALE ANALYSIS] AT ALA-2</scope>
    <scope>CLEAVAGE OF INITIATOR METHIONINE [LARGE SCALE ANALYSIS]</scope>
    <scope>IDENTIFICATION BY MASS SPECTROMETRY [LARGE SCALE ANALYSIS]</scope>
</reference>
<reference key="10">
    <citation type="journal article" date="2009" name="Sci. Signal.">
        <title>Quantitative phosphoproteomic analysis of T cell receptor signaling reveals system-wide modulation of protein-protein interactions.</title>
        <authorList>
            <person name="Mayya V."/>
            <person name="Lundgren D.H."/>
            <person name="Hwang S.-I."/>
            <person name="Rezaul K."/>
            <person name="Wu L."/>
            <person name="Eng J.K."/>
            <person name="Rodionov V."/>
            <person name="Han D.K."/>
        </authorList>
    </citation>
    <scope>PHOSPHORYLATION [LARGE SCALE ANALYSIS] AT SER-181</scope>
    <scope>IDENTIFICATION BY MASS SPECTROMETRY [LARGE SCALE ANALYSIS]</scope>
    <source>
        <tissue>Leukemic T-cell</tissue>
    </source>
</reference>
<reference key="11">
    <citation type="journal article" date="2011" name="BMC Syst. Biol.">
        <title>Initial characterization of the human central proteome.</title>
        <authorList>
            <person name="Burkard T.R."/>
            <person name="Planyavsky M."/>
            <person name="Kaupe I."/>
            <person name="Breitwieser F.P."/>
            <person name="Buerckstuemmer T."/>
            <person name="Bennett K.L."/>
            <person name="Superti-Furga G."/>
            <person name="Colinge J."/>
        </authorList>
    </citation>
    <scope>IDENTIFICATION BY MASS SPECTROMETRY [LARGE SCALE ANALYSIS]</scope>
</reference>
<reference key="12">
    <citation type="journal article" date="2012" name="Mol. Cell. Proteomics">
        <title>Comparative large-scale characterisation of plant vs. mammal proteins reveals similar and idiosyncratic N-alpha acetylation features.</title>
        <authorList>
            <person name="Bienvenut W.V."/>
            <person name="Sumpton D."/>
            <person name="Martinez A."/>
            <person name="Lilla S."/>
            <person name="Espagne C."/>
            <person name="Meinnel T."/>
            <person name="Giglione C."/>
        </authorList>
    </citation>
    <scope>ACETYLATION [LARGE SCALE ANALYSIS] AT ALA-2</scope>
    <scope>CLEAVAGE OF INITIATOR METHIONINE [LARGE SCALE ANALYSIS]</scope>
    <scope>IDENTIFICATION BY MASS SPECTROMETRY [LARGE SCALE ANALYSIS]</scope>
</reference>
<reference key="13">
    <citation type="journal article" date="2013" name="J. Proteome Res.">
        <title>Toward a comprehensive characterization of a human cancer cell phosphoproteome.</title>
        <authorList>
            <person name="Zhou H."/>
            <person name="Di Palma S."/>
            <person name="Preisinger C."/>
            <person name="Peng M."/>
            <person name="Polat A.N."/>
            <person name="Heck A.J."/>
            <person name="Mohammed S."/>
        </authorList>
    </citation>
    <scope>PHOSPHORYLATION [LARGE SCALE ANALYSIS] AT SER-181</scope>
    <scope>IDENTIFICATION BY MASS SPECTROMETRY [LARGE SCALE ANALYSIS]</scope>
    <source>
        <tissue>Cervix carcinoma</tissue>
        <tissue>Erythroleukemia</tissue>
    </source>
</reference>
<reference key="14">
    <citation type="journal article" date="2014" name="J. Proteomics">
        <title>An enzyme assisted RP-RPLC approach for in-depth analysis of human liver phosphoproteome.</title>
        <authorList>
            <person name="Bian Y."/>
            <person name="Song C."/>
            <person name="Cheng K."/>
            <person name="Dong M."/>
            <person name="Wang F."/>
            <person name="Huang J."/>
            <person name="Sun D."/>
            <person name="Wang L."/>
            <person name="Ye M."/>
            <person name="Zou H."/>
        </authorList>
    </citation>
    <scope>IDENTIFICATION BY MASS SPECTROMETRY [LARGE SCALE ANALYSIS]</scope>
    <source>
        <tissue>Liver</tissue>
    </source>
</reference>
<reference key="15">
    <citation type="journal article" date="2011" name="Biochem. J.">
        <title>Structural changes in the BH3 domain of SOUL protein upon interaction with the anti-apoptotic protein Bcl-xL.</title>
        <authorList>
            <person name="Ambrosi E."/>
            <person name="Capaldi S."/>
            <person name="Bovi M."/>
            <person name="Saccomani G."/>
            <person name="Perduca M."/>
            <person name="Monaco H.L."/>
        </authorList>
    </citation>
    <scope>X-RAY CRYSTALLOGRAPHY (1.6 ANGSTROMS) IN COMPLEX WITH BCL2L1</scope>
    <scope>SUBUNIT</scope>
    <scope>DOMAIN</scope>
    <scope>INTERACTION WITH BCL2L1</scope>
</reference>
<reference evidence="9" key="16">
    <citation type="journal article" date="2016" name="J. Biol. Chem.">
        <title>Structural and functional study of apoptosis-linked gene-2.Heme-binding protein 2 interactions in HIV-1 production.</title>
        <authorList>
            <person name="Ma J."/>
            <person name="Zhang X."/>
            <person name="Feng Y."/>
            <person name="Zhang H."/>
            <person name="Wang X."/>
            <person name="Zheng Y."/>
            <person name="Qiao W."/>
            <person name="Liu X."/>
        </authorList>
    </citation>
    <scope>X-RAY CRYSTALLOGRAPHY (2.20 ANGSTROMS) OF 20-197 IN COMPLEX WITH PDCD6</scope>
    <scope>INTERACTION WITH PDCD6</scope>
</reference>